<organism>
    <name type="scientific">Sinorhizobium sp</name>
    <dbReference type="NCBI Taxonomy" id="42445"/>
    <lineage>
        <taxon>Bacteria</taxon>
        <taxon>Pseudomonadati</taxon>
        <taxon>Pseudomonadota</taxon>
        <taxon>Alphaproteobacteria</taxon>
        <taxon>Hyphomicrobiales</taxon>
        <taxon>Rhizobiaceae</taxon>
        <taxon>Sinorhizobium/Ensifer group</taxon>
        <taxon>Sinorhizobium</taxon>
    </lineage>
</organism>
<feature type="initiator methionine" description="Removed" evidence="2">
    <location>
        <position position="1"/>
    </location>
</feature>
<feature type="chain" id="PRO_0000141321" description="Cobyric acid synthase">
    <location>
        <begin position="2"/>
        <end position="485"/>
    </location>
</feature>
<feature type="domain" description="GATase cobBQ-type">
    <location>
        <begin position="251"/>
        <end position="438"/>
    </location>
</feature>
<feature type="active site" description="Nucleophile" evidence="1">
    <location>
        <position position="333"/>
    </location>
</feature>
<feature type="active site" evidence="1">
    <location>
        <position position="430"/>
    </location>
</feature>
<keyword id="KW-0169">Cobalamin biosynthesis</keyword>
<keyword id="KW-0903">Direct protein sequencing</keyword>
<keyword id="KW-0315">Glutamine amidotransferase</keyword>
<evidence type="ECO:0000250" key="1"/>
<evidence type="ECO:0000269" key="2">
    <source>
    </source>
</evidence>
<evidence type="ECO:0000305" key="3"/>
<comment type="function">
    <text>Catalyzes amidations at positions B, D, E, and G on adenosylcobyrinic A,C-diamide. NH(2) groups are provided by glutamine, and one molecule of ATP is hydrogenolyzed for each amidation.</text>
</comment>
<comment type="pathway">
    <text>Cofactor biosynthesis; adenosylcobalamin biosynthesis.</text>
</comment>
<comment type="subunit">
    <text>Homodimer.</text>
</comment>
<comment type="similarity">
    <text evidence="3">Belongs to the CobB/CobQ family. CobQ subfamily.</text>
</comment>
<comment type="caution">
    <text evidence="3">Was originally thought to originate from Pseudomonas denitrificans, but similarity searches show that the sequence is much closer to Sinorhizobium. The entry's taxonomy has been changed.</text>
</comment>
<proteinExistence type="evidence at protein level"/>
<dbReference type="EMBL" id="M62866">
    <property type="protein sequence ID" value="AAA25777.1"/>
    <property type="molecule type" value="Genomic_DNA"/>
</dbReference>
<dbReference type="SMR" id="P29932"/>
<dbReference type="KEGG" id="ag:AAA25777"/>
<dbReference type="BioCyc" id="MetaCyc:MONOMER-124"/>
<dbReference type="UniPathway" id="UPA00148"/>
<dbReference type="GO" id="GO:0015420">
    <property type="term" value="F:ABC-type vitamin B12 transporter activity"/>
    <property type="evidence" value="ECO:0007669"/>
    <property type="project" value="UniProtKB-UniRule"/>
</dbReference>
<dbReference type="GO" id="GO:0003824">
    <property type="term" value="F:catalytic activity"/>
    <property type="evidence" value="ECO:0007669"/>
    <property type="project" value="InterPro"/>
</dbReference>
<dbReference type="GO" id="GO:0009236">
    <property type="term" value="P:cobalamin biosynthetic process"/>
    <property type="evidence" value="ECO:0007669"/>
    <property type="project" value="UniProtKB-UniRule"/>
</dbReference>
<dbReference type="CDD" id="cd05389">
    <property type="entry name" value="CobQ_N"/>
    <property type="match status" value="1"/>
</dbReference>
<dbReference type="CDD" id="cd01750">
    <property type="entry name" value="GATase1_CobQ"/>
    <property type="match status" value="1"/>
</dbReference>
<dbReference type="Gene3D" id="3.40.50.880">
    <property type="match status" value="1"/>
</dbReference>
<dbReference type="Gene3D" id="3.40.50.300">
    <property type="entry name" value="P-loop containing nucleotide triphosphate hydrolases"/>
    <property type="match status" value="1"/>
</dbReference>
<dbReference type="HAMAP" id="MF_00028">
    <property type="entry name" value="CobQ"/>
    <property type="match status" value="1"/>
</dbReference>
<dbReference type="InterPro" id="IPR029062">
    <property type="entry name" value="Class_I_gatase-like"/>
</dbReference>
<dbReference type="InterPro" id="IPR002586">
    <property type="entry name" value="CobQ/CobB/MinD/ParA_Nub-bd_dom"/>
</dbReference>
<dbReference type="InterPro" id="IPR033949">
    <property type="entry name" value="CobQ_GATase1"/>
</dbReference>
<dbReference type="InterPro" id="IPR047045">
    <property type="entry name" value="CobQ_N"/>
</dbReference>
<dbReference type="InterPro" id="IPR004459">
    <property type="entry name" value="CobQ_synth"/>
</dbReference>
<dbReference type="InterPro" id="IPR011698">
    <property type="entry name" value="GATase_3"/>
</dbReference>
<dbReference type="InterPro" id="IPR027417">
    <property type="entry name" value="P-loop_NTPase"/>
</dbReference>
<dbReference type="NCBIfam" id="TIGR00313">
    <property type="entry name" value="cobQ"/>
    <property type="match status" value="1"/>
</dbReference>
<dbReference type="NCBIfam" id="NF001989">
    <property type="entry name" value="PRK00784.1"/>
    <property type="match status" value="1"/>
</dbReference>
<dbReference type="PANTHER" id="PTHR21343:SF1">
    <property type="entry name" value="COBYRIC ACID SYNTHASE"/>
    <property type="match status" value="1"/>
</dbReference>
<dbReference type="PANTHER" id="PTHR21343">
    <property type="entry name" value="DETHIOBIOTIN SYNTHETASE"/>
    <property type="match status" value="1"/>
</dbReference>
<dbReference type="Pfam" id="PF01656">
    <property type="entry name" value="CbiA"/>
    <property type="match status" value="1"/>
</dbReference>
<dbReference type="Pfam" id="PF07685">
    <property type="entry name" value="GATase_3"/>
    <property type="match status" value="1"/>
</dbReference>
<dbReference type="SUPFAM" id="SSF52317">
    <property type="entry name" value="Class I glutamine amidotransferase-like"/>
    <property type="match status" value="1"/>
</dbReference>
<dbReference type="SUPFAM" id="SSF52540">
    <property type="entry name" value="P-loop containing nucleoside triphosphate hydrolases"/>
    <property type="match status" value="1"/>
</dbReference>
<dbReference type="PROSITE" id="PS51274">
    <property type="entry name" value="GATASE_COBBQ"/>
    <property type="match status" value="1"/>
</dbReference>
<name>COBQ_SINSX</name>
<gene>
    <name type="primary">cobQ</name>
</gene>
<protein>
    <recommendedName>
        <fullName>Cobyric acid synthase</fullName>
    </recommendedName>
</protein>
<sequence>MTRRIMLQGTGSDVGKSVLVAGLCRLAANQGLKVRPFKPQNMSNNAAVSDDGGEIGRAQWLQALAARVPSSVHMNPVLLKPQSDVGSQIVVQGKVAGQARGREYQALKPKLLGAVMESFEQISAGADLVVVEGAGSPAEINLRPGDIANMGFATRANVPVVLVGDIDRGGVIASLVGTHAILPEEDRRMVTGYLINKFRGDVTLFDDGIAAVNRYTGWPCFGVVPWLKAAARLPAEDSVVLEKLTRGEGRALKVAVPVLSRIANFDDLDPLAAEPEIDLVFVRPGSPIPVDAGLVVIPGSKSTIGDLIDFRAQGWDRDLERHVRRGGRVIGICGGYQMLGRRVTDPLGIEGGERAVEGLGLLEVETEMAPEKTVRNSRAWSLEHDVVLEGYEIHLGKTQGADCGRPSVRIDNRADGALSADGRVMGTYLHGLFTSDAYRGALLKSFGIEGGANNYRQSVDAALDDVANELEAVLDRRWLDELLRH</sequence>
<accession>P29932</accession>
<reference key="1">
    <citation type="journal article" date="1991" name="J. Bacteriol.">
        <title>Nucleotide sequence and genetic analysis of a 13.1-kilobase-pair Pseudomonas denitrificans DNA fragment containing five cob genes and identification of structural genes encoding Cob(I)alamin adenosyltransferase, cobyric acid synthase, and bifunctional cobinamide kinase-cobinamide phosphate guanylyltransferase.</title>
        <authorList>
            <person name="Crouzet J."/>
            <person name="Levy-Schil S."/>
            <person name="Cameron B."/>
            <person name="Cauchois L."/>
            <person name="Rigault S."/>
            <person name="Rouyez M.-C."/>
            <person name="Blanche F."/>
            <person name="Debussche L."/>
            <person name="Thibaut D."/>
        </authorList>
    </citation>
    <scope>NUCLEOTIDE SEQUENCE [GENOMIC DNA]</scope>
    <source>
        <strain>SC510</strain>
    </source>
</reference>
<reference key="2">
    <citation type="journal article" date="1991" name="J. Bacteriol.">
        <title>Biosynthesis of vitamin B12: stepwise amidation of carboxyl groups b, d, e, and g of cobyrinic acid a,c-diamide is catalyzed by one enzyme in Pseudomonas denitrificans.</title>
        <authorList>
            <person name="Blanche F."/>
            <person name="Couderc M."/>
            <person name="Debussche L."/>
            <person name="Thibaut D."/>
            <person name="Cameron B."/>
            <person name="Crouzet J."/>
        </authorList>
    </citation>
    <scope>CHARACTERIZATION</scope>
    <scope>PROTEIN SEQUENCE OF 2-17</scope>
</reference>